<keyword id="KW-0131">Cell cycle</keyword>
<keyword id="KW-0132">Cell division</keyword>
<keyword id="KW-0159">Chromosome partition</keyword>
<keyword id="KW-0963">Cytoplasm</keyword>
<keyword id="KW-1185">Reference proteome</keyword>
<feature type="chain" id="PRO_1000069958" description="Segregation and condensation protein B">
    <location>
        <begin position="1"/>
        <end position="199"/>
    </location>
</feature>
<reference key="1">
    <citation type="journal article" date="2006" name="Proc. Natl. Acad. Sci. U.S.A.">
        <title>Comparative genomics of the lactic acid bacteria.</title>
        <authorList>
            <person name="Makarova K.S."/>
            <person name="Slesarev A."/>
            <person name="Wolf Y.I."/>
            <person name="Sorokin A."/>
            <person name="Mirkin B."/>
            <person name="Koonin E.V."/>
            <person name="Pavlov A."/>
            <person name="Pavlova N."/>
            <person name="Karamychev V."/>
            <person name="Polouchine N."/>
            <person name="Shakhova V."/>
            <person name="Grigoriev I."/>
            <person name="Lou Y."/>
            <person name="Rohksar D."/>
            <person name="Lucas S."/>
            <person name="Huang K."/>
            <person name="Goodstein D.M."/>
            <person name="Hawkins T."/>
            <person name="Plengvidhya V."/>
            <person name="Welker D."/>
            <person name="Hughes J."/>
            <person name="Goh Y."/>
            <person name="Benson A."/>
            <person name="Baldwin K."/>
            <person name="Lee J.-H."/>
            <person name="Diaz-Muniz I."/>
            <person name="Dosti B."/>
            <person name="Smeianov V."/>
            <person name="Wechter W."/>
            <person name="Barabote R."/>
            <person name="Lorca G."/>
            <person name="Altermann E."/>
            <person name="Barrangou R."/>
            <person name="Ganesan B."/>
            <person name="Xie Y."/>
            <person name="Rawsthorne H."/>
            <person name="Tamir D."/>
            <person name="Parker C."/>
            <person name="Breidt F."/>
            <person name="Broadbent J.R."/>
            <person name="Hutkins R."/>
            <person name="O'Sullivan D."/>
            <person name="Steele J."/>
            <person name="Unlu G."/>
            <person name="Saier M.H. Jr."/>
            <person name="Klaenhammer T."/>
            <person name="Richardson P."/>
            <person name="Kozyavkin S."/>
            <person name="Weimer B.C."/>
            <person name="Mills D.A."/>
        </authorList>
    </citation>
    <scope>NUCLEOTIDE SEQUENCE [LARGE SCALE GENOMIC DNA]</scope>
    <source>
        <strain>ATCC 8293 / DSM 20343 / BCRC 11652 / CCM 1803 / JCM 6124 / NCDO 523 / NBRC 100496 / NCIMB 8023 / NCTC 12954 / NRRL B-1118 / 37Y</strain>
    </source>
</reference>
<dbReference type="EMBL" id="CP000414">
    <property type="protein sequence ID" value="ABJ62394.1"/>
    <property type="molecule type" value="Genomic_DNA"/>
</dbReference>
<dbReference type="RefSeq" id="WP_010293836.1">
    <property type="nucleotide sequence ID" value="NC_008531.1"/>
</dbReference>
<dbReference type="SMR" id="Q03WM8"/>
<dbReference type="EnsemblBacteria" id="ABJ62394">
    <property type="protein sequence ID" value="ABJ62394"/>
    <property type="gene ID" value="LEUM_1297"/>
</dbReference>
<dbReference type="GeneID" id="29575998"/>
<dbReference type="KEGG" id="lme:LEUM_1297"/>
<dbReference type="eggNOG" id="COG1386">
    <property type="taxonomic scope" value="Bacteria"/>
</dbReference>
<dbReference type="HOGENOM" id="CLU_045647_5_3_9"/>
<dbReference type="Proteomes" id="UP000000362">
    <property type="component" value="Chromosome"/>
</dbReference>
<dbReference type="GO" id="GO:0005737">
    <property type="term" value="C:cytoplasm"/>
    <property type="evidence" value="ECO:0007669"/>
    <property type="project" value="UniProtKB-SubCell"/>
</dbReference>
<dbReference type="GO" id="GO:0051301">
    <property type="term" value="P:cell division"/>
    <property type="evidence" value="ECO:0007669"/>
    <property type="project" value="UniProtKB-KW"/>
</dbReference>
<dbReference type="GO" id="GO:0051304">
    <property type="term" value="P:chromosome separation"/>
    <property type="evidence" value="ECO:0007669"/>
    <property type="project" value="InterPro"/>
</dbReference>
<dbReference type="GO" id="GO:0006260">
    <property type="term" value="P:DNA replication"/>
    <property type="evidence" value="ECO:0007669"/>
    <property type="project" value="UniProtKB-UniRule"/>
</dbReference>
<dbReference type="Gene3D" id="1.10.10.10">
    <property type="entry name" value="Winged helix-like DNA-binding domain superfamily/Winged helix DNA-binding domain"/>
    <property type="match status" value="2"/>
</dbReference>
<dbReference type="HAMAP" id="MF_01804">
    <property type="entry name" value="ScpB"/>
    <property type="match status" value="1"/>
</dbReference>
<dbReference type="InterPro" id="IPR005234">
    <property type="entry name" value="ScpB_csome_segregation"/>
</dbReference>
<dbReference type="InterPro" id="IPR036388">
    <property type="entry name" value="WH-like_DNA-bd_sf"/>
</dbReference>
<dbReference type="InterPro" id="IPR036390">
    <property type="entry name" value="WH_DNA-bd_sf"/>
</dbReference>
<dbReference type="NCBIfam" id="TIGR00281">
    <property type="entry name" value="SMC-Scp complex subunit ScpB"/>
    <property type="match status" value="1"/>
</dbReference>
<dbReference type="PANTHER" id="PTHR34298">
    <property type="entry name" value="SEGREGATION AND CONDENSATION PROTEIN B"/>
    <property type="match status" value="1"/>
</dbReference>
<dbReference type="PANTHER" id="PTHR34298:SF2">
    <property type="entry name" value="SEGREGATION AND CONDENSATION PROTEIN B"/>
    <property type="match status" value="1"/>
</dbReference>
<dbReference type="Pfam" id="PF04079">
    <property type="entry name" value="SMC_ScpB"/>
    <property type="match status" value="1"/>
</dbReference>
<dbReference type="PIRSF" id="PIRSF019345">
    <property type="entry name" value="ScpB"/>
    <property type="match status" value="1"/>
</dbReference>
<dbReference type="SUPFAM" id="SSF46785">
    <property type="entry name" value="Winged helix' DNA-binding domain"/>
    <property type="match status" value="2"/>
</dbReference>
<comment type="function">
    <text evidence="1">Participates in chromosomal partition during cell division. May act via the formation of a condensin-like complex containing Smc and ScpA that pull DNA away from mid-cell into both cell halves.</text>
</comment>
<comment type="subunit">
    <text evidence="1">Homodimer. Homodimerization may be required to stabilize the binding of ScpA to the Smc head domains. Component of a cohesin-like complex composed of ScpA, ScpB and the Smc homodimer, in which ScpA and ScpB bind to the head domain of Smc. The presence of the three proteins is required for the association of the complex with DNA.</text>
</comment>
<comment type="subcellular location">
    <subcellularLocation>
        <location evidence="1">Cytoplasm</location>
    </subcellularLocation>
    <text evidence="1">Associated with two foci at the outer edges of the nucleoid region in young cells, and at four foci within both cell halves in older cells.</text>
</comment>
<comment type="similarity">
    <text evidence="1">Belongs to the ScpB family.</text>
</comment>
<name>SCPB_LEUMM</name>
<gene>
    <name evidence="1" type="primary">scpB</name>
    <name type="ordered locus">LEUM_1297</name>
</gene>
<evidence type="ECO:0000255" key="1">
    <source>
        <dbReference type="HAMAP-Rule" id="MF_01804"/>
    </source>
</evidence>
<protein>
    <recommendedName>
        <fullName evidence="1">Segregation and condensation protein B</fullName>
    </recommendedName>
</protein>
<accession>Q03WM8</accession>
<sequence length="199" mass="22144">MNNLSQIEALLFVSGDEGISVKNMSIITGFDRSAIQGLLEELVLKYDTDLSSALQIRESDDVYRLVTKPELGGTVKQYFDSPVNATLSQAQLETLVIVAYKQPITRVEIDTIRGVQSSGTLQKLALRQLVHEVGRKDEPGRPIMFGTTDEFLDYFGLKSIEELPPLPDFNMLDLGDDIDGELFTSAFDVHQSESEKENV</sequence>
<proteinExistence type="inferred from homology"/>
<organism>
    <name type="scientific">Leuconostoc mesenteroides subsp. mesenteroides (strain ATCC 8293 / DSM 20343 / BCRC 11652 / CCM 1803 / JCM 6124 / NCDO 523 / NBRC 100496 / NCIMB 8023 / NCTC 12954 / NRRL B-1118 / 37Y)</name>
    <dbReference type="NCBI Taxonomy" id="203120"/>
    <lineage>
        <taxon>Bacteria</taxon>
        <taxon>Bacillati</taxon>
        <taxon>Bacillota</taxon>
        <taxon>Bacilli</taxon>
        <taxon>Lactobacillales</taxon>
        <taxon>Lactobacillaceae</taxon>
        <taxon>Leuconostoc</taxon>
    </lineage>
</organism>